<protein>
    <recommendedName>
        <fullName>Non-structural protein of 4.8 kDa</fullName>
        <shortName>ns4.8</shortName>
    </recommendedName>
    <alternativeName>
        <fullName>4.8 kDa accessory protein</fullName>
    </alternativeName>
</protein>
<organismHost>
    <name type="scientific">Bos taurus</name>
    <name type="common">Bovine</name>
    <dbReference type="NCBI Taxonomy" id="9913"/>
</organismHost>
<name>NS48_CVBEN</name>
<gene>
    <name type="ORF">4b</name>
</gene>
<evidence type="ECO:0000305" key="1"/>
<sequence length="45" mass="4885">MPMATTIEGADYTNIMPITVLTTVYLGVSIGIDTSTTGFTCFSWY</sequence>
<proteinExistence type="inferred from homology"/>
<reference key="1">
    <citation type="journal article" date="2001" name="J. Gen. Virol.">
        <title>Comparison of genomic and predicted amino acid sequences of respiratory and enteric bovine coronaviruses isolated from the same animal with fatal shipping pneumonia.</title>
        <authorList>
            <person name="Chouljenko V.N."/>
            <person name="Lin X.Q."/>
            <person name="Storz J."/>
            <person name="Kousoulas K.G."/>
            <person name="Gorbalenya A.E."/>
        </authorList>
    </citation>
    <scope>NUCLEOTIDE SEQUENCE [GENOMIC RNA]</scope>
</reference>
<feature type="chain" id="PRO_0000283958" description="Non-structural protein of 4.8 kDa">
    <location>
        <begin position="1"/>
        <end position="45"/>
    </location>
</feature>
<accession>Q91A24</accession>
<comment type="similarity">
    <text evidence="1">Belongs to the coronaviruses ns4/ns4.8 protein family.</text>
</comment>
<dbReference type="EMBL" id="AF391541">
    <property type="protein sequence ID" value="AAK83358.1"/>
    <property type="molecule type" value="Genomic_RNA"/>
</dbReference>
<dbReference type="RefSeq" id="NP_150079.1">
    <property type="nucleotide sequence ID" value="NC_003045.1"/>
</dbReference>
<dbReference type="KEGG" id="vg:1724649"/>
<dbReference type="Proteomes" id="UP000008570">
    <property type="component" value="Segment"/>
</dbReference>
<dbReference type="InterPro" id="IPR005603">
    <property type="entry name" value="Corona_NS4"/>
</dbReference>
<dbReference type="Pfam" id="PF03905">
    <property type="entry name" value="Corona_NS4"/>
    <property type="match status" value="1"/>
</dbReference>
<organism>
    <name type="scientific">Bovine coronavirus (strain 98TXSF-110-ENT)</name>
    <name type="common">BCoV-ENT</name>
    <name type="synonym">BCV</name>
    <dbReference type="NCBI Taxonomy" id="233262"/>
    <lineage>
        <taxon>Viruses</taxon>
        <taxon>Riboviria</taxon>
        <taxon>Orthornavirae</taxon>
        <taxon>Pisuviricota</taxon>
        <taxon>Pisoniviricetes</taxon>
        <taxon>Nidovirales</taxon>
        <taxon>Cornidovirineae</taxon>
        <taxon>Coronaviridae</taxon>
        <taxon>Orthocoronavirinae</taxon>
        <taxon>Betacoronavirus</taxon>
        <taxon>Embecovirus</taxon>
        <taxon>Betacoronavirus 1</taxon>
    </lineage>
</organism>